<reference key="1">
    <citation type="journal article" date="2005" name="Nat. Biotechnol.">
        <title>Complete genome sequence of the plant commensal Pseudomonas fluorescens Pf-5.</title>
        <authorList>
            <person name="Paulsen I.T."/>
            <person name="Press C.M."/>
            <person name="Ravel J."/>
            <person name="Kobayashi D.Y."/>
            <person name="Myers G.S.A."/>
            <person name="Mavrodi D.V."/>
            <person name="DeBoy R.T."/>
            <person name="Seshadri R."/>
            <person name="Ren Q."/>
            <person name="Madupu R."/>
            <person name="Dodson R.J."/>
            <person name="Durkin A.S."/>
            <person name="Brinkac L.M."/>
            <person name="Daugherty S.C."/>
            <person name="Sullivan S.A."/>
            <person name="Rosovitz M.J."/>
            <person name="Gwinn M.L."/>
            <person name="Zhou L."/>
            <person name="Schneider D.J."/>
            <person name="Cartinhour S.W."/>
            <person name="Nelson W.C."/>
            <person name="Weidman J."/>
            <person name="Watkins K."/>
            <person name="Tran K."/>
            <person name="Khouri H."/>
            <person name="Pierson E.A."/>
            <person name="Pierson L.S. III"/>
            <person name="Thomashow L.S."/>
            <person name="Loper J.E."/>
        </authorList>
    </citation>
    <scope>NUCLEOTIDE SEQUENCE [LARGE SCALE GENOMIC DNA]</scope>
    <source>
        <strain>ATCC BAA-477 / NRRL B-23932 / Pf-5</strain>
    </source>
</reference>
<gene>
    <name evidence="1" type="primary">rapA</name>
    <name type="ordered locus">PFL_1307</name>
</gene>
<dbReference type="EC" id="3.6.4.-" evidence="1"/>
<dbReference type="EMBL" id="CP000076">
    <property type="protein sequence ID" value="AAY90592.1"/>
    <property type="molecule type" value="Genomic_DNA"/>
</dbReference>
<dbReference type="RefSeq" id="WP_011059649.1">
    <property type="nucleotide sequence ID" value="NC_004129.6"/>
</dbReference>
<dbReference type="SMR" id="Q4KH47"/>
<dbReference type="STRING" id="220664.PFL_1307"/>
<dbReference type="KEGG" id="pfl:PFL_1307"/>
<dbReference type="PATRIC" id="fig|220664.5.peg.1339"/>
<dbReference type="eggNOG" id="COG0553">
    <property type="taxonomic scope" value="Bacteria"/>
</dbReference>
<dbReference type="HOGENOM" id="CLU_011520_0_0_6"/>
<dbReference type="Proteomes" id="UP000008540">
    <property type="component" value="Chromosome"/>
</dbReference>
<dbReference type="GO" id="GO:0005524">
    <property type="term" value="F:ATP binding"/>
    <property type="evidence" value="ECO:0007669"/>
    <property type="project" value="UniProtKB-UniRule"/>
</dbReference>
<dbReference type="GO" id="GO:0003677">
    <property type="term" value="F:DNA binding"/>
    <property type="evidence" value="ECO:0007669"/>
    <property type="project" value="UniProtKB-KW"/>
</dbReference>
<dbReference type="GO" id="GO:0004386">
    <property type="term" value="F:helicase activity"/>
    <property type="evidence" value="ECO:0007669"/>
    <property type="project" value="UniProtKB-UniRule"/>
</dbReference>
<dbReference type="GO" id="GO:0016817">
    <property type="term" value="F:hydrolase activity, acting on acid anhydrides"/>
    <property type="evidence" value="ECO:0007669"/>
    <property type="project" value="InterPro"/>
</dbReference>
<dbReference type="GO" id="GO:0006355">
    <property type="term" value="P:regulation of DNA-templated transcription"/>
    <property type="evidence" value="ECO:0007669"/>
    <property type="project" value="UniProtKB-UniRule"/>
</dbReference>
<dbReference type="CDD" id="cd18011">
    <property type="entry name" value="DEXDc_RapA"/>
    <property type="match status" value="1"/>
</dbReference>
<dbReference type="CDD" id="cd18793">
    <property type="entry name" value="SF2_C_SNF"/>
    <property type="match status" value="1"/>
</dbReference>
<dbReference type="Gene3D" id="2.30.30.140">
    <property type="match status" value="1"/>
</dbReference>
<dbReference type="Gene3D" id="2.30.30.930">
    <property type="match status" value="1"/>
</dbReference>
<dbReference type="Gene3D" id="3.30.360.80">
    <property type="match status" value="1"/>
</dbReference>
<dbReference type="Gene3D" id="6.10.140.1500">
    <property type="match status" value="1"/>
</dbReference>
<dbReference type="Gene3D" id="6.10.140.2230">
    <property type="match status" value="1"/>
</dbReference>
<dbReference type="Gene3D" id="3.40.50.300">
    <property type="entry name" value="P-loop containing nucleotide triphosphate hydrolases"/>
    <property type="match status" value="1"/>
</dbReference>
<dbReference type="Gene3D" id="3.40.50.10810">
    <property type="entry name" value="Tandem AAA-ATPase domain"/>
    <property type="match status" value="1"/>
</dbReference>
<dbReference type="HAMAP" id="MF_01821">
    <property type="entry name" value="Helicase_RapA"/>
    <property type="match status" value="1"/>
</dbReference>
<dbReference type="InterPro" id="IPR014001">
    <property type="entry name" value="Helicase_ATP-bd"/>
</dbReference>
<dbReference type="InterPro" id="IPR001650">
    <property type="entry name" value="Helicase_C-like"/>
</dbReference>
<dbReference type="InterPro" id="IPR023949">
    <property type="entry name" value="Helicase_RapA"/>
</dbReference>
<dbReference type="InterPro" id="IPR027417">
    <property type="entry name" value="P-loop_NTPase"/>
</dbReference>
<dbReference type="InterPro" id="IPR022737">
    <property type="entry name" value="RapA_C"/>
</dbReference>
<dbReference type="InterPro" id="IPR038718">
    <property type="entry name" value="SNF2-like_sf"/>
</dbReference>
<dbReference type="InterPro" id="IPR049730">
    <property type="entry name" value="SNF2/RAD54-like_C"/>
</dbReference>
<dbReference type="InterPro" id="IPR000330">
    <property type="entry name" value="SNF2_N"/>
</dbReference>
<dbReference type="InterPro" id="IPR040765">
    <property type="entry name" value="Tudor_1_RapA"/>
</dbReference>
<dbReference type="InterPro" id="IPR040766">
    <property type="entry name" value="Tudor_2_RapA"/>
</dbReference>
<dbReference type="NCBIfam" id="NF003426">
    <property type="entry name" value="PRK04914.1"/>
    <property type="match status" value="1"/>
</dbReference>
<dbReference type="PANTHER" id="PTHR45766">
    <property type="entry name" value="DNA ANNEALING HELICASE AND ENDONUCLEASE ZRANB3 FAMILY MEMBER"/>
    <property type="match status" value="1"/>
</dbReference>
<dbReference type="PANTHER" id="PTHR45766:SF6">
    <property type="entry name" value="SWI_SNF-RELATED MATRIX-ASSOCIATED ACTIN-DEPENDENT REGULATOR OF CHROMATIN SUBFAMILY A-LIKE PROTEIN 1"/>
    <property type="match status" value="1"/>
</dbReference>
<dbReference type="Pfam" id="PF00271">
    <property type="entry name" value="Helicase_C"/>
    <property type="match status" value="1"/>
</dbReference>
<dbReference type="Pfam" id="PF12137">
    <property type="entry name" value="RapA_C"/>
    <property type="match status" value="1"/>
</dbReference>
<dbReference type="Pfam" id="PF00176">
    <property type="entry name" value="SNF2-rel_dom"/>
    <property type="match status" value="1"/>
</dbReference>
<dbReference type="Pfam" id="PF18339">
    <property type="entry name" value="Tudor_1_RapA"/>
    <property type="match status" value="1"/>
</dbReference>
<dbReference type="Pfam" id="PF18337">
    <property type="entry name" value="Tudor_RapA"/>
    <property type="match status" value="1"/>
</dbReference>
<dbReference type="SMART" id="SM00487">
    <property type="entry name" value="DEXDc"/>
    <property type="match status" value="1"/>
</dbReference>
<dbReference type="SMART" id="SM00490">
    <property type="entry name" value="HELICc"/>
    <property type="match status" value="1"/>
</dbReference>
<dbReference type="SUPFAM" id="SSF52540">
    <property type="entry name" value="P-loop containing nucleoside triphosphate hydrolases"/>
    <property type="match status" value="2"/>
</dbReference>
<dbReference type="PROSITE" id="PS51192">
    <property type="entry name" value="HELICASE_ATP_BIND_1"/>
    <property type="match status" value="1"/>
</dbReference>
<dbReference type="PROSITE" id="PS51194">
    <property type="entry name" value="HELICASE_CTER"/>
    <property type="match status" value="1"/>
</dbReference>
<proteinExistence type="inferred from homology"/>
<name>RAPA_PSEF5</name>
<feature type="chain" id="PRO_1000088366" description="RNA polymerase-associated protein RapA">
    <location>
        <begin position="1"/>
        <end position="949"/>
    </location>
</feature>
<feature type="domain" description="Helicase ATP-binding" evidence="1">
    <location>
        <begin position="164"/>
        <end position="332"/>
    </location>
</feature>
<feature type="domain" description="Helicase C-terminal" evidence="1">
    <location>
        <begin position="474"/>
        <end position="628"/>
    </location>
</feature>
<feature type="short sequence motif" description="DEAH box">
    <location>
        <begin position="278"/>
        <end position="281"/>
    </location>
</feature>
<feature type="binding site" evidence="1">
    <location>
        <begin position="177"/>
        <end position="184"/>
    </location>
    <ligand>
        <name>ATP</name>
        <dbReference type="ChEBI" id="CHEBI:30616"/>
    </ligand>
</feature>
<comment type="function">
    <text evidence="1">Transcription regulator that activates transcription by stimulating RNA polymerase (RNAP) recycling in case of stress conditions such as supercoiled DNA or high salt concentrations. Probably acts by releasing the RNAP, when it is trapped or immobilized on tightly supercoiled DNA. Does not activate transcription on linear DNA. Probably not involved in DNA repair.</text>
</comment>
<comment type="subunit">
    <text evidence="1">Interacts with the RNAP. Has a higher affinity for the core RNAP than for the holoenzyme. Its ATPase activity is stimulated by binding to RNAP.</text>
</comment>
<comment type="similarity">
    <text evidence="1">Belongs to the SNF2/RAD54 helicase family. RapA subfamily.</text>
</comment>
<organism>
    <name type="scientific">Pseudomonas fluorescens (strain ATCC BAA-477 / NRRL B-23932 / Pf-5)</name>
    <dbReference type="NCBI Taxonomy" id="220664"/>
    <lineage>
        <taxon>Bacteria</taxon>
        <taxon>Pseudomonadati</taxon>
        <taxon>Pseudomonadota</taxon>
        <taxon>Gammaproteobacteria</taxon>
        <taxon>Pseudomonadales</taxon>
        <taxon>Pseudomonadaceae</taxon>
        <taxon>Pseudomonas</taxon>
    </lineage>
</organism>
<protein>
    <recommendedName>
        <fullName evidence="1">RNA polymerase-associated protein RapA</fullName>
        <ecNumber evidence="1">3.6.4.-</ecNumber>
    </recommendedName>
    <alternativeName>
        <fullName evidence="1">ATP-dependent helicase HepA</fullName>
    </alternativeName>
</protein>
<sequence length="949" mass="106293">MAQQYQPGQRWISDSEAELGLGTVLAQDGRLLTVLYPATGDTRQYALRNAPLTRVRFSPGDSITHFEGWKMTVQEVDDVDGLLVYHGLNGQNEAVTLPETQLSNFIQFRLASDRLFAGQIDPLAWFSLRYHTLEHTSRQLQSSLWGLGGVRAQPIAHQLHIAREVADRIAPRVLLADEVGLGKTIEAGLVIHRQLLSGRASRVLILVPENLQHQWLVEMRRRFNLQVALFDEERFIESDASNPFEDTQLALVALEWLVDDEKAQDALFAAGWDLMVVDEAHHLVWHEDQVSPEYALVEQLAETIPGVLLLTATPEQLGQDSHFARLRLLDPNRFHDLAAFRAESENYRPVAEAVQELMDKGRLSPEAHKTIHGFLGNEGEALLAAVNDGDSEASARLVRELLDRHGTGRVLFRNTRAAVQGFPERKLHAYPLPCPDEYLELPLGEHAELYPEVSFQAQPDVSDDEQRWWKFDPRVEWLIDQLKMLKRTKVLVICAHAETAMDLEDALRVRSGIPATVFHEGMNILERDRAAAYFADEEFGAQVLICSEIGSEGRNFQFAHHLVLFDLPSHPDLLEQRIGRLDRIGQKHVIELHVPYLETSPQERLFQWYHEALNAFLNTCPTGNALQHQFGPRLLPLLENADDGEWQALIDAARGERERLEAELHTGRDRLLELNSGGAGEGDALVEAILEQDDQFALPIYMETLFDAFGIDSEDHSENALILKPSEKMLDASFPLGDDEGVTITYDRNQALSREDMQFITWEHPMVQGGMDLVLSGSMGNTAVALIKNKALKPGTVLLELLYVSEVVAPRSLQLGRYLPPAALRCLLDANGNDLSARVAFETLNDQLESVPKASANKFIQAQRDQLAPKINAGEAKVAPRHAERVAEAQRRLAADTDEELARLTALQAVNPTVRDSELVALRQQREQGLAMLEKAALRLEAIRVLVAG</sequence>
<accession>Q4KH47</accession>
<keyword id="KW-0010">Activator</keyword>
<keyword id="KW-0067">ATP-binding</keyword>
<keyword id="KW-0238">DNA-binding</keyword>
<keyword id="KW-0347">Helicase</keyword>
<keyword id="KW-0378">Hydrolase</keyword>
<keyword id="KW-0547">Nucleotide-binding</keyword>
<keyword id="KW-0804">Transcription</keyword>
<keyword id="KW-0805">Transcription regulation</keyword>
<evidence type="ECO:0000255" key="1">
    <source>
        <dbReference type="HAMAP-Rule" id="MF_01821"/>
    </source>
</evidence>